<evidence type="ECO:0000255" key="1">
    <source>
        <dbReference type="HAMAP-Rule" id="MF_00454"/>
    </source>
</evidence>
<organism>
    <name type="scientific">Thermotoga maritima (strain ATCC 43589 / DSM 3109 / JCM 10099 / NBRC 100826 / MSB8)</name>
    <dbReference type="NCBI Taxonomy" id="243274"/>
    <lineage>
        <taxon>Bacteria</taxon>
        <taxon>Thermotogati</taxon>
        <taxon>Thermotogota</taxon>
        <taxon>Thermotogae</taxon>
        <taxon>Thermotogales</taxon>
        <taxon>Thermotogaceae</taxon>
        <taxon>Thermotoga</taxon>
    </lineage>
</organism>
<sequence>MIELDYLTIAFGGAIGAVLRYLVSRTINSLLPFSYIPLGTIIVNSVGSFFLSFLMFAAIEKVPLSKEAILFFGTGLLGAFTTFSTFTYETLSLIEESPARGVAYALANLLFAFTCAYFGMILGRGKV</sequence>
<protein>
    <recommendedName>
        <fullName evidence="1">Fluoride-specific ion channel FluC</fullName>
    </recommendedName>
</protein>
<proteinExistence type="inferred from homology"/>
<reference key="1">
    <citation type="journal article" date="1999" name="Nature">
        <title>Evidence for lateral gene transfer between Archaea and Bacteria from genome sequence of Thermotoga maritima.</title>
        <authorList>
            <person name="Nelson K.E."/>
            <person name="Clayton R.A."/>
            <person name="Gill S.R."/>
            <person name="Gwinn M.L."/>
            <person name="Dodson R.J."/>
            <person name="Haft D.H."/>
            <person name="Hickey E.K."/>
            <person name="Peterson J.D."/>
            <person name="Nelson W.C."/>
            <person name="Ketchum K.A."/>
            <person name="McDonald L.A."/>
            <person name="Utterback T.R."/>
            <person name="Malek J.A."/>
            <person name="Linher K.D."/>
            <person name="Garrett M.M."/>
            <person name="Stewart A.M."/>
            <person name="Cotton M.D."/>
            <person name="Pratt M.S."/>
            <person name="Phillips C.A."/>
            <person name="Richardson D.L."/>
            <person name="Heidelberg J.F."/>
            <person name="Sutton G.G."/>
            <person name="Fleischmann R.D."/>
            <person name="Eisen J.A."/>
            <person name="White O."/>
            <person name="Salzberg S.L."/>
            <person name="Smith H.O."/>
            <person name="Venter J.C."/>
            <person name="Fraser C.M."/>
        </authorList>
    </citation>
    <scope>NUCLEOTIDE SEQUENCE [LARGE SCALE GENOMIC DNA]</scope>
    <source>
        <strain>ATCC 43589 / DSM 3109 / JCM 10099 / NBRC 100826 / MSB8</strain>
    </source>
</reference>
<accession>Q9WXM8</accession>
<feature type="chain" id="PRO_0000110203" description="Fluoride-specific ion channel FluC">
    <location>
        <begin position="1"/>
        <end position="127"/>
    </location>
</feature>
<feature type="transmembrane region" description="Helical" evidence="1">
    <location>
        <begin position="4"/>
        <end position="24"/>
    </location>
</feature>
<feature type="transmembrane region" description="Helical" evidence="1">
    <location>
        <begin position="39"/>
        <end position="59"/>
    </location>
</feature>
<feature type="transmembrane region" description="Helical" evidence="1">
    <location>
        <begin position="68"/>
        <end position="88"/>
    </location>
</feature>
<feature type="transmembrane region" description="Helical" evidence="1">
    <location>
        <begin position="102"/>
        <end position="122"/>
    </location>
</feature>
<feature type="binding site" evidence="1">
    <location>
        <position position="78"/>
    </location>
    <ligand>
        <name>Na(+)</name>
        <dbReference type="ChEBI" id="CHEBI:29101"/>
        <note>structural</note>
    </ligand>
</feature>
<feature type="binding site" evidence="1">
    <location>
        <position position="81"/>
    </location>
    <ligand>
        <name>Na(+)</name>
        <dbReference type="ChEBI" id="CHEBI:29101"/>
        <note>structural</note>
    </ligand>
</feature>
<dbReference type="EMBL" id="AE000512">
    <property type="protein sequence ID" value="AAD35114.1"/>
    <property type="molecule type" value="Genomic_DNA"/>
</dbReference>
<dbReference type="PIR" id="F72427">
    <property type="entry name" value="F72427"/>
</dbReference>
<dbReference type="RefSeq" id="NP_227836.1">
    <property type="nucleotide sequence ID" value="NC_000853.1"/>
</dbReference>
<dbReference type="RefSeq" id="WP_004082466.1">
    <property type="nucleotide sequence ID" value="NZ_CP011107.1"/>
</dbReference>
<dbReference type="SMR" id="Q9WXM8"/>
<dbReference type="FunCoup" id="Q9WXM8">
    <property type="interactions" value="178"/>
</dbReference>
<dbReference type="STRING" id="243274.TM_0020"/>
<dbReference type="PaxDb" id="243274-THEMA_04700"/>
<dbReference type="EnsemblBacteria" id="AAD35114">
    <property type="protein sequence ID" value="AAD35114"/>
    <property type="gene ID" value="TM_0020"/>
</dbReference>
<dbReference type="KEGG" id="tma:TM0020"/>
<dbReference type="KEGG" id="tmm:Tmari_0017"/>
<dbReference type="KEGG" id="tmw:THMA_0016"/>
<dbReference type="eggNOG" id="COG0239">
    <property type="taxonomic scope" value="Bacteria"/>
</dbReference>
<dbReference type="InParanoid" id="Q9WXM8"/>
<dbReference type="OrthoDB" id="9815830at2"/>
<dbReference type="Proteomes" id="UP000008183">
    <property type="component" value="Chromosome"/>
</dbReference>
<dbReference type="GO" id="GO:0005886">
    <property type="term" value="C:plasma membrane"/>
    <property type="evidence" value="ECO:0000318"/>
    <property type="project" value="GO_Central"/>
</dbReference>
<dbReference type="GO" id="GO:0062054">
    <property type="term" value="F:fluoride channel activity"/>
    <property type="evidence" value="ECO:0007669"/>
    <property type="project" value="UniProtKB-UniRule"/>
</dbReference>
<dbReference type="GO" id="GO:1903425">
    <property type="term" value="F:fluoride transmembrane transporter activity"/>
    <property type="evidence" value="ECO:0000318"/>
    <property type="project" value="GO_Central"/>
</dbReference>
<dbReference type="GO" id="GO:0046872">
    <property type="term" value="F:metal ion binding"/>
    <property type="evidence" value="ECO:0007669"/>
    <property type="project" value="UniProtKB-KW"/>
</dbReference>
<dbReference type="GO" id="GO:0140114">
    <property type="term" value="P:cellular detoxification of fluoride"/>
    <property type="evidence" value="ECO:0007669"/>
    <property type="project" value="UniProtKB-UniRule"/>
</dbReference>
<dbReference type="GO" id="GO:1903424">
    <property type="term" value="P:fluoride transmembrane transport"/>
    <property type="evidence" value="ECO:0000318"/>
    <property type="project" value="GO_Central"/>
</dbReference>
<dbReference type="HAMAP" id="MF_00454">
    <property type="entry name" value="FluC"/>
    <property type="match status" value="1"/>
</dbReference>
<dbReference type="InterPro" id="IPR003691">
    <property type="entry name" value="FluC"/>
</dbReference>
<dbReference type="NCBIfam" id="TIGR00494">
    <property type="entry name" value="crcB"/>
    <property type="match status" value="1"/>
</dbReference>
<dbReference type="PANTHER" id="PTHR28259">
    <property type="entry name" value="FLUORIDE EXPORT PROTEIN 1-RELATED"/>
    <property type="match status" value="1"/>
</dbReference>
<dbReference type="PANTHER" id="PTHR28259:SF18">
    <property type="entry name" value="FLUORIDE-SPECIFIC ION CHANNEL FLUC"/>
    <property type="match status" value="1"/>
</dbReference>
<dbReference type="Pfam" id="PF02537">
    <property type="entry name" value="CRCB"/>
    <property type="match status" value="1"/>
</dbReference>
<comment type="function">
    <text evidence="1">Fluoride-specific ion channel. Important for reducing fluoride concentration in the cell, thus reducing its toxicity.</text>
</comment>
<comment type="catalytic activity">
    <reaction evidence="1">
        <text>fluoride(in) = fluoride(out)</text>
        <dbReference type="Rhea" id="RHEA:76159"/>
        <dbReference type="ChEBI" id="CHEBI:17051"/>
    </reaction>
    <physiologicalReaction direction="left-to-right" evidence="1">
        <dbReference type="Rhea" id="RHEA:76160"/>
    </physiologicalReaction>
</comment>
<comment type="activity regulation">
    <text evidence="1">Na(+) is not transported, but it plays an essential structural role and its presence is essential for fluoride channel function.</text>
</comment>
<comment type="subcellular location">
    <subcellularLocation>
        <location evidence="1">Cell inner membrane</location>
        <topology evidence="1">Multi-pass membrane protein</topology>
    </subcellularLocation>
</comment>
<comment type="similarity">
    <text evidence="1">Belongs to the fluoride channel Fluc/FEX (TC 1.A.43) family.</text>
</comment>
<name>FLUC_THEMA</name>
<keyword id="KW-0997">Cell inner membrane</keyword>
<keyword id="KW-1003">Cell membrane</keyword>
<keyword id="KW-0407">Ion channel</keyword>
<keyword id="KW-0406">Ion transport</keyword>
<keyword id="KW-0472">Membrane</keyword>
<keyword id="KW-0479">Metal-binding</keyword>
<keyword id="KW-1185">Reference proteome</keyword>
<keyword id="KW-0915">Sodium</keyword>
<keyword id="KW-0812">Transmembrane</keyword>
<keyword id="KW-1133">Transmembrane helix</keyword>
<keyword id="KW-0813">Transport</keyword>
<gene>
    <name evidence="1" type="primary">fluC</name>
    <name evidence="1" type="synonym">crcB</name>
    <name type="ordered locus">TM_0020</name>
</gene>